<gene>
    <name type="ordered locus">YJR096W</name>
    <name type="ORF">J1926</name>
</gene>
<feature type="chain" id="PRO_0000124679" description="Uncharacterized oxidoreductase YJR096W">
    <location>
        <begin position="1"/>
        <end position="282"/>
    </location>
</feature>
<feature type="active site" description="Proton donor" evidence="1">
    <location>
        <position position="50"/>
    </location>
</feature>
<feature type="binding site" evidence="1">
    <location>
        <position position="115"/>
    </location>
    <ligand>
        <name>substrate</name>
    </ligand>
</feature>
<feature type="site" description="Lowers pKa of active site Tyr" evidence="1">
    <location>
        <position position="81"/>
    </location>
</feature>
<name>YJ66_YEAST</name>
<evidence type="ECO:0000250" key="1"/>
<evidence type="ECO:0000269" key="2">
    <source>
    </source>
</evidence>
<evidence type="ECO:0000305" key="3"/>
<dbReference type="EC" id="1.-.-.-"/>
<dbReference type="EMBL" id="Z49596">
    <property type="protein sequence ID" value="CAA89626.1"/>
    <property type="molecule type" value="Genomic_DNA"/>
</dbReference>
<dbReference type="EMBL" id="AY558257">
    <property type="protein sequence ID" value="AAS56583.1"/>
    <property type="molecule type" value="Genomic_DNA"/>
</dbReference>
<dbReference type="EMBL" id="BK006943">
    <property type="protein sequence ID" value="DAA08881.1"/>
    <property type="molecule type" value="Genomic_DNA"/>
</dbReference>
<dbReference type="PIR" id="S57117">
    <property type="entry name" value="S57117"/>
</dbReference>
<dbReference type="RefSeq" id="NP_012630.1">
    <property type="nucleotide sequence ID" value="NM_001181754.1"/>
</dbReference>
<dbReference type="SMR" id="P47137"/>
<dbReference type="BioGRID" id="33851">
    <property type="interactions" value="91"/>
</dbReference>
<dbReference type="FunCoup" id="P47137">
    <property type="interactions" value="197"/>
</dbReference>
<dbReference type="IntAct" id="P47137">
    <property type="interactions" value="17"/>
</dbReference>
<dbReference type="MINT" id="P47137"/>
<dbReference type="STRING" id="4932.YJR096W"/>
<dbReference type="iPTMnet" id="P47137"/>
<dbReference type="PaxDb" id="4932-YJR096W"/>
<dbReference type="PeptideAtlas" id="P47137"/>
<dbReference type="EnsemblFungi" id="YJR096W_mRNA">
    <property type="protein sequence ID" value="YJR096W"/>
    <property type="gene ID" value="YJR096W"/>
</dbReference>
<dbReference type="GeneID" id="853559"/>
<dbReference type="KEGG" id="sce:YJR096W"/>
<dbReference type="AGR" id="SGD:S000003857"/>
<dbReference type="SGD" id="S000003857">
    <property type="gene designation" value="YJR096W"/>
</dbReference>
<dbReference type="VEuPathDB" id="FungiDB:YJR096W"/>
<dbReference type="eggNOG" id="KOG1577">
    <property type="taxonomic scope" value="Eukaryota"/>
</dbReference>
<dbReference type="HOGENOM" id="CLU_023205_0_1_1"/>
<dbReference type="InParanoid" id="P47137"/>
<dbReference type="OMA" id="PWCMRQE"/>
<dbReference type="OrthoDB" id="416253at2759"/>
<dbReference type="BioCyc" id="YEAST:G3O-31724-MONOMER"/>
<dbReference type="Reactome" id="R-SCE-156590">
    <property type="pathway name" value="Glutathione conjugation"/>
</dbReference>
<dbReference type="Reactome" id="R-SCE-193144">
    <property type="pathway name" value="Estrogen biosynthesis"/>
</dbReference>
<dbReference type="Reactome" id="R-SCE-193368">
    <property type="pathway name" value="Synthesis of bile acids and bile salts via 7alpha-hydroxycholesterol"/>
</dbReference>
<dbReference type="Reactome" id="R-SCE-193775">
    <property type="pathway name" value="Synthesis of bile acids and bile salts via 24-hydroxycholesterol"/>
</dbReference>
<dbReference type="Reactome" id="R-SCE-193807">
    <property type="pathway name" value="Synthesis of bile acids and bile salts via 27-hydroxycholesterol"/>
</dbReference>
<dbReference type="Reactome" id="R-SCE-2162123">
    <property type="pathway name" value="Synthesis of Prostaglandins (PG) and Thromboxanes (TX)"/>
</dbReference>
<dbReference type="Reactome" id="R-SCE-5365859">
    <property type="pathway name" value="RA biosynthesis pathway"/>
</dbReference>
<dbReference type="Reactome" id="R-SCE-5661270">
    <property type="pathway name" value="Formation of xylulose-5-phosphate"/>
</dbReference>
<dbReference type="Reactome" id="R-SCE-9757110">
    <property type="pathway name" value="Prednisone ADME"/>
</dbReference>
<dbReference type="BioGRID-ORCS" id="853559">
    <property type="hits" value="0 hits in 10 CRISPR screens"/>
</dbReference>
<dbReference type="PRO" id="PR:P47137"/>
<dbReference type="Proteomes" id="UP000002311">
    <property type="component" value="Chromosome X"/>
</dbReference>
<dbReference type="RNAct" id="P47137">
    <property type="molecule type" value="protein"/>
</dbReference>
<dbReference type="GO" id="GO:0005737">
    <property type="term" value="C:cytoplasm"/>
    <property type="evidence" value="ECO:0007005"/>
    <property type="project" value="SGD"/>
</dbReference>
<dbReference type="GO" id="GO:0005829">
    <property type="term" value="C:cytosol"/>
    <property type="evidence" value="ECO:0000318"/>
    <property type="project" value="GO_Central"/>
</dbReference>
<dbReference type="GO" id="GO:0005634">
    <property type="term" value="C:nucleus"/>
    <property type="evidence" value="ECO:0007005"/>
    <property type="project" value="SGD"/>
</dbReference>
<dbReference type="GO" id="GO:0004033">
    <property type="term" value="F:aldo-keto reductase (NADPH) activity"/>
    <property type="evidence" value="ECO:0000314"/>
    <property type="project" value="SGD"/>
</dbReference>
<dbReference type="GO" id="GO:0004032">
    <property type="term" value="F:aldose reductase (NADPH) activity"/>
    <property type="evidence" value="ECO:0000314"/>
    <property type="project" value="SGD"/>
</dbReference>
<dbReference type="GO" id="GO:0019568">
    <property type="term" value="P:arabinose catabolic process"/>
    <property type="evidence" value="ECO:0000314"/>
    <property type="project" value="SGD"/>
</dbReference>
<dbReference type="GO" id="GO:0034599">
    <property type="term" value="P:cellular response to oxidative stress"/>
    <property type="evidence" value="ECO:0000316"/>
    <property type="project" value="SGD"/>
</dbReference>
<dbReference type="GO" id="GO:0042843">
    <property type="term" value="P:D-xylose catabolic process"/>
    <property type="evidence" value="ECO:0000315"/>
    <property type="project" value="SGD"/>
</dbReference>
<dbReference type="CDD" id="cd19071">
    <property type="entry name" value="AKR_AKR1-5-like"/>
    <property type="match status" value="1"/>
</dbReference>
<dbReference type="FunFam" id="3.20.20.100:FF:000002">
    <property type="entry name" value="2,5-diketo-D-gluconic acid reductase A"/>
    <property type="match status" value="1"/>
</dbReference>
<dbReference type="Gene3D" id="3.20.20.100">
    <property type="entry name" value="NADP-dependent oxidoreductase domain"/>
    <property type="match status" value="1"/>
</dbReference>
<dbReference type="InterPro" id="IPR020471">
    <property type="entry name" value="AKR"/>
</dbReference>
<dbReference type="InterPro" id="IPR018170">
    <property type="entry name" value="Aldo/ket_reductase_CS"/>
</dbReference>
<dbReference type="InterPro" id="IPR023210">
    <property type="entry name" value="NADP_OxRdtase_dom"/>
</dbReference>
<dbReference type="InterPro" id="IPR036812">
    <property type="entry name" value="NADP_OxRdtase_dom_sf"/>
</dbReference>
<dbReference type="PANTHER" id="PTHR43827">
    <property type="entry name" value="2,5-DIKETO-D-GLUCONIC ACID REDUCTASE"/>
    <property type="match status" value="1"/>
</dbReference>
<dbReference type="PANTHER" id="PTHR43827:SF13">
    <property type="entry name" value="ALDO_KETO REDUCTASE FAMILY PROTEIN"/>
    <property type="match status" value="1"/>
</dbReference>
<dbReference type="Pfam" id="PF00248">
    <property type="entry name" value="Aldo_ket_red"/>
    <property type="match status" value="1"/>
</dbReference>
<dbReference type="PIRSF" id="PIRSF000097">
    <property type="entry name" value="AKR"/>
    <property type="match status" value="1"/>
</dbReference>
<dbReference type="PRINTS" id="PR00069">
    <property type="entry name" value="ALDKETRDTASE"/>
</dbReference>
<dbReference type="SUPFAM" id="SSF51430">
    <property type="entry name" value="NAD(P)-linked oxidoreductase"/>
    <property type="match status" value="1"/>
</dbReference>
<dbReference type="PROSITE" id="PS00798">
    <property type="entry name" value="ALDOKETO_REDUCTASE_1"/>
    <property type="match status" value="1"/>
</dbReference>
<dbReference type="PROSITE" id="PS00062">
    <property type="entry name" value="ALDOKETO_REDUCTASE_2"/>
    <property type="match status" value="1"/>
</dbReference>
<dbReference type="PROSITE" id="PS00063">
    <property type="entry name" value="ALDOKETO_REDUCTASE_3"/>
    <property type="match status" value="1"/>
</dbReference>
<proteinExistence type="evidence at protein level"/>
<comment type="interaction">
    <interactant intactId="EBI-25572">
        <id>P47137</id>
    </interactant>
    <interactant intactId="EBI-701">
        <id>P33203</id>
        <label>PRP40</label>
    </interactant>
    <organismsDiffer>false</organismsDiffer>
    <experiments>2</experiments>
</comment>
<comment type="interaction">
    <interactant intactId="EBI-25572">
        <id>P47137</id>
    </interactant>
    <interactant intactId="EBI-16219">
        <id>P39940</id>
        <label>RSP5</label>
    </interactant>
    <organismsDiffer>false</organismsDiffer>
    <experiments>3</experiments>
</comment>
<comment type="miscellaneous">
    <text evidence="2">Present with 6960 molecules/cell in log phase SD medium.</text>
</comment>
<comment type="similarity">
    <text evidence="3">Belongs to the aldo/keto reductase family.</text>
</comment>
<sequence>MVPKFYKLSNGFKIPSIALGTYDIPRSQTAEIVYEGVKCGYRHFDTAVLYGNEKEVGDGIIKWLNEDPGNHKREEIFYTTKLWNSQNGYKRAKAAIRQCLNEVSGLQYIDLLLIHSPLEGSKLRLETWRAMQEAVDEGLVKSIGVSNYGKKHIDELLNWPELKHKPVVNQIEISPWIMRQELADYCKSKGLVVEAFAPLCHGYKMTNPDLLKVCKEVDRNPGQVLIRWSLQHGYLPLPKTKTVKRLEGNLAAYNFELSDEQMKFLDHPDAYEPTDWECTDAP</sequence>
<keyword id="KW-0560">Oxidoreductase</keyword>
<keyword id="KW-1185">Reference proteome</keyword>
<protein>
    <recommendedName>
        <fullName>Uncharacterized oxidoreductase YJR096W</fullName>
        <ecNumber>1.-.-.-</ecNumber>
    </recommendedName>
</protein>
<reference key="1">
    <citation type="journal article" date="1996" name="EMBO J.">
        <title>Complete nucleotide sequence of Saccharomyces cerevisiae chromosome X.</title>
        <authorList>
            <person name="Galibert F."/>
            <person name="Alexandraki D."/>
            <person name="Baur A."/>
            <person name="Boles E."/>
            <person name="Chalwatzis N."/>
            <person name="Chuat J.-C."/>
            <person name="Coster F."/>
            <person name="Cziepluch C."/>
            <person name="de Haan M."/>
            <person name="Domdey H."/>
            <person name="Durand P."/>
            <person name="Entian K.-D."/>
            <person name="Gatius M."/>
            <person name="Goffeau A."/>
            <person name="Grivell L.A."/>
            <person name="Hennemann A."/>
            <person name="Herbert C.J."/>
            <person name="Heumann K."/>
            <person name="Hilger F."/>
            <person name="Hollenberg C.P."/>
            <person name="Huang M.-E."/>
            <person name="Jacq C."/>
            <person name="Jauniaux J.-C."/>
            <person name="Katsoulou C."/>
            <person name="Kirchrath L."/>
            <person name="Kleine K."/>
            <person name="Kordes E."/>
            <person name="Koetter P."/>
            <person name="Liebl S."/>
            <person name="Louis E.J."/>
            <person name="Manus V."/>
            <person name="Mewes H.-W."/>
            <person name="Miosga T."/>
            <person name="Obermaier B."/>
            <person name="Perea J."/>
            <person name="Pohl T.M."/>
            <person name="Portetelle D."/>
            <person name="Pujol A."/>
            <person name="Purnelle B."/>
            <person name="Ramezani Rad M."/>
            <person name="Rasmussen S.W."/>
            <person name="Rose M."/>
            <person name="Rossau R."/>
            <person name="Schaaff-Gerstenschlaeger I."/>
            <person name="Smits P.H.M."/>
            <person name="Scarcez T."/>
            <person name="Soriano N."/>
            <person name="To Van D."/>
            <person name="Tzermia M."/>
            <person name="Van Broekhoven A."/>
            <person name="Vandenbol M."/>
            <person name="Wedler H."/>
            <person name="von Wettstein D."/>
            <person name="Wambutt R."/>
            <person name="Zagulski M."/>
            <person name="Zollner A."/>
            <person name="Karpfinger-Hartl L."/>
        </authorList>
    </citation>
    <scope>NUCLEOTIDE SEQUENCE [LARGE SCALE GENOMIC DNA]</scope>
    <source>
        <strain>ATCC 204508 / S288c</strain>
    </source>
</reference>
<reference key="2">
    <citation type="journal article" date="2014" name="G3 (Bethesda)">
        <title>The reference genome sequence of Saccharomyces cerevisiae: Then and now.</title>
        <authorList>
            <person name="Engel S.R."/>
            <person name="Dietrich F.S."/>
            <person name="Fisk D.G."/>
            <person name="Binkley G."/>
            <person name="Balakrishnan R."/>
            <person name="Costanzo M.C."/>
            <person name="Dwight S.S."/>
            <person name="Hitz B.C."/>
            <person name="Karra K."/>
            <person name="Nash R.S."/>
            <person name="Weng S."/>
            <person name="Wong E.D."/>
            <person name="Lloyd P."/>
            <person name="Skrzypek M.S."/>
            <person name="Miyasato S.R."/>
            <person name="Simison M."/>
            <person name="Cherry J.M."/>
        </authorList>
    </citation>
    <scope>GENOME REANNOTATION</scope>
    <source>
        <strain>ATCC 204508 / S288c</strain>
    </source>
</reference>
<reference key="3">
    <citation type="journal article" date="2007" name="Genome Res.">
        <title>Approaching a complete repository of sequence-verified protein-encoding clones for Saccharomyces cerevisiae.</title>
        <authorList>
            <person name="Hu Y."/>
            <person name="Rolfs A."/>
            <person name="Bhullar B."/>
            <person name="Murthy T.V.S."/>
            <person name="Zhu C."/>
            <person name="Berger M.F."/>
            <person name="Camargo A.A."/>
            <person name="Kelley F."/>
            <person name="McCarron S."/>
            <person name="Jepson D."/>
            <person name="Richardson A."/>
            <person name="Raphael J."/>
            <person name="Moreira D."/>
            <person name="Taycher E."/>
            <person name="Zuo D."/>
            <person name="Mohr S."/>
            <person name="Kane M.F."/>
            <person name="Williamson J."/>
            <person name="Simpson A.J.G."/>
            <person name="Bulyk M.L."/>
            <person name="Harlow E."/>
            <person name="Marsischky G."/>
            <person name="Kolodner R.D."/>
            <person name="LaBaer J."/>
        </authorList>
    </citation>
    <scope>NUCLEOTIDE SEQUENCE [GENOMIC DNA]</scope>
    <source>
        <strain>ATCC 204508 / S288c</strain>
    </source>
</reference>
<reference key="4">
    <citation type="journal article" date="2003" name="Nature">
        <title>Global analysis of protein expression in yeast.</title>
        <authorList>
            <person name="Ghaemmaghami S."/>
            <person name="Huh W.-K."/>
            <person name="Bower K."/>
            <person name="Howson R.W."/>
            <person name="Belle A."/>
            <person name="Dephoure N."/>
            <person name="O'Shea E.K."/>
            <person name="Weissman J.S."/>
        </authorList>
    </citation>
    <scope>LEVEL OF PROTEIN EXPRESSION [LARGE SCALE ANALYSIS]</scope>
</reference>
<accession>P47137</accession>
<accession>D6VWR5</accession>
<organism>
    <name type="scientific">Saccharomyces cerevisiae (strain ATCC 204508 / S288c)</name>
    <name type="common">Baker's yeast</name>
    <dbReference type="NCBI Taxonomy" id="559292"/>
    <lineage>
        <taxon>Eukaryota</taxon>
        <taxon>Fungi</taxon>
        <taxon>Dikarya</taxon>
        <taxon>Ascomycota</taxon>
        <taxon>Saccharomycotina</taxon>
        <taxon>Saccharomycetes</taxon>
        <taxon>Saccharomycetales</taxon>
        <taxon>Saccharomycetaceae</taxon>
        <taxon>Saccharomyces</taxon>
    </lineage>
</organism>